<sequence>MKWLSKSWAVAVVLLVGCAGRQEFIPPQPNAEEYAPPKLDYTLPDAQSGSLYRHQYTMTLFQDRRAYRVGDVLTVVLSEETSSSKKAGTKFGKSSAVNFAAPTIGTKKFDELGVSIDGSRNFDGSASSSQGNKLQGAITVTVHDVLPNGVLRISGEKWLRLNQGDEFIRLTGIVRVDDITRNNQVSSQRIADARITYAGRGALADSNAAGWLTQFFNSPWVPF</sequence>
<dbReference type="EMBL" id="BA000032">
    <property type="protein sequence ID" value="BAC61613.1"/>
    <property type="molecule type" value="Genomic_DNA"/>
</dbReference>
<dbReference type="RefSeq" id="NP_799780.1">
    <property type="nucleotide sequence ID" value="NC_004605.1"/>
</dbReference>
<dbReference type="SMR" id="Q87JI3"/>
<dbReference type="GeneID" id="1190958"/>
<dbReference type="KEGG" id="vpa:VPA0270"/>
<dbReference type="PATRIC" id="fig|223926.6.peg.3222"/>
<dbReference type="eggNOG" id="COG2063">
    <property type="taxonomic scope" value="Bacteria"/>
</dbReference>
<dbReference type="HOGENOM" id="CLU_069313_0_2_6"/>
<dbReference type="Proteomes" id="UP000002493">
    <property type="component" value="Chromosome 2"/>
</dbReference>
<dbReference type="GO" id="GO:0009427">
    <property type="term" value="C:bacterial-type flagellum basal body, distal rod, L ring"/>
    <property type="evidence" value="ECO:0007669"/>
    <property type="project" value="InterPro"/>
</dbReference>
<dbReference type="GO" id="GO:0009279">
    <property type="term" value="C:cell outer membrane"/>
    <property type="evidence" value="ECO:0007669"/>
    <property type="project" value="UniProtKB-SubCell"/>
</dbReference>
<dbReference type="GO" id="GO:0003774">
    <property type="term" value="F:cytoskeletal motor activity"/>
    <property type="evidence" value="ECO:0007669"/>
    <property type="project" value="InterPro"/>
</dbReference>
<dbReference type="GO" id="GO:0071973">
    <property type="term" value="P:bacterial-type flagellum-dependent cell motility"/>
    <property type="evidence" value="ECO:0007669"/>
    <property type="project" value="InterPro"/>
</dbReference>
<dbReference type="HAMAP" id="MF_00415">
    <property type="entry name" value="FlgH"/>
    <property type="match status" value="1"/>
</dbReference>
<dbReference type="InterPro" id="IPR000527">
    <property type="entry name" value="Flag_Lring"/>
</dbReference>
<dbReference type="NCBIfam" id="NF001304">
    <property type="entry name" value="PRK00249.1-4"/>
    <property type="match status" value="1"/>
</dbReference>
<dbReference type="PANTHER" id="PTHR34933">
    <property type="entry name" value="FLAGELLAR L-RING PROTEIN"/>
    <property type="match status" value="1"/>
</dbReference>
<dbReference type="PANTHER" id="PTHR34933:SF1">
    <property type="entry name" value="FLAGELLAR L-RING PROTEIN"/>
    <property type="match status" value="1"/>
</dbReference>
<dbReference type="Pfam" id="PF02107">
    <property type="entry name" value="FlgH"/>
    <property type="match status" value="1"/>
</dbReference>
<dbReference type="PRINTS" id="PR01008">
    <property type="entry name" value="FLGLRINGFLGH"/>
</dbReference>
<dbReference type="PROSITE" id="PS51257">
    <property type="entry name" value="PROKAR_LIPOPROTEIN"/>
    <property type="match status" value="1"/>
</dbReference>
<keyword id="KW-0975">Bacterial flagellum</keyword>
<keyword id="KW-0998">Cell outer membrane</keyword>
<keyword id="KW-0449">Lipoprotein</keyword>
<keyword id="KW-0472">Membrane</keyword>
<keyword id="KW-0564">Palmitate</keyword>
<keyword id="KW-0732">Signal</keyword>
<organism>
    <name type="scientific">Vibrio parahaemolyticus serotype O3:K6 (strain RIMD 2210633)</name>
    <dbReference type="NCBI Taxonomy" id="223926"/>
    <lineage>
        <taxon>Bacteria</taxon>
        <taxon>Pseudomonadati</taxon>
        <taxon>Pseudomonadota</taxon>
        <taxon>Gammaproteobacteria</taxon>
        <taxon>Vibrionales</taxon>
        <taxon>Vibrionaceae</taxon>
        <taxon>Vibrio</taxon>
    </lineage>
</organism>
<reference key="1">
    <citation type="journal article" date="2003" name="Lancet">
        <title>Genome sequence of Vibrio parahaemolyticus: a pathogenic mechanism distinct from that of V. cholerae.</title>
        <authorList>
            <person name="Makino K."/>
            <person name="Oshima K."/>
            <person name="Kurokawa K."/>
            <person name="Yokoyama K."/>
            <person name="Uda T."/>
            <person name="Tagomori K."/>
            <person name="Iijima Y."/>
            <person name="Najima M."/>
            <person name="Nakano M."/>
            <person name="Yamashita A."/>
            <person name="Kubota Y."/>
            <person name="Kimura S."/>
            <person name="Yasunaga T."/>
            <person name="Honda T."/>
            <person name="Shinagawa H."/>
            <person name="Hattori M."/>
            <person name="Iida T."/>
        </authorList>
    </citation>
    <scope>NUCLEOTIDE SEQUENCE [LARGE SCALE GENOMIC DNA]</scope>
    <source>
        <strain>RIMD 2210633</strain>
    </source>
</reference>
<name>FLGH2_VIBPA</name>
<proteinExistence type="inferred from homology"/>
<evidence type="ECO:0000255" key="1">
    <source>
        <dbReference type="HAMAP-Rule" id="MF_00415"/>
    </source>
</evidence>
<protein>
    <recommendedName>
        <fullName evidence="1">Flagellar L-ring protein 2</fullName>
    </recommendedName>
    <alternativeName>
        <fullName evidence="1">Basal body L-ring protein 2</fullName>
    </alternativeName>
</protein>
<comment type="function">
    <text evidence="1">Assembles around the rod to form the L-ring and probably protects the motor/basal body from shearing forces during rotation.</text>
</comment>
<comment type="subunit">
    <text evidence="1">The basal body constitutes a major portion of the flagellar organelle and consists of four rings (L,P,S, and M) mounted on a central rod.</text>
</comment>
<comment type="subcellular location">
    <subcellularLocation>
        <location evidence="1">Cell outer membrane</location>
        <topology evidence="1">Lipid-anchor</topology>
    </subcellularLocation>
    <subcellularLocation>
        <location evidence="1">Bacterial flagellum basal body</location>
    </subcellularLocation>
</comment>
<comment type="similarity">
    <text evidence="1">Belongs to the FlgH family.</text>
</comment>
<gene>
    <name evidence="1" type="primary">flgH2</name>
    <name type="ordered locus">VPA0270</name>
</gene>
<feature type="signal peptide" evidence="1">
    <location>
        <begin position="1"/>
        <end position="17"/>
    </location>
</feature>
<feature type="chain" id="PRO_0000009479" description="Flagellar L-ring protein 2">
    <location>
        <begin position="18"/>
        <end position="223"/>
    </location>
</feature>
<feature type="lipid moiety-binding region" description="N-palmitoyl cysteine" evidence="1">
    <location>
        <position position="18"/>
    </location>
</feature>
<feature type="lipid moiety-binding region" description="S-diacylglycerol cysteine" evidence="1">
    <location>
        <position position="18"/>
    </location>
</feature>
<accession>Q87JI3</accession>